<keyword id="KW-1185">Reference proteome</keyword>
<keyword id="KW-0687">Ribonucleoprotein</keyword>
<keyword id="KW-0689">Ribosomal protein</keyword>
<name>RL15E_ARCFU</name>
<reference key="1">
    <citation type="journal article" date="1997" name="Nature">
        <title>The complete genome sequence of the hyperthermophilic, sulphate-reducing archaeon Archaeoglobus fulgidus.</title>
        <authorList>
            <person name="Klenk H.-P."/>
            <person name="Clayton R.A."/>
            <person name="Tomb J.-F."/>
            <person name="White O."/>
            <person name="Nelson K.E."/>
            <person name="Ketchum K.A."/>
            <person name="Dodson R.J."/>
            <person name="Gwinn M.L."/>
            <person name="Hickey E.K."/>
            <person name="Peterson J.D."/>
            <person name="Richardson D.L."/>
            <person name="Kerlavage A.R."/>
            <person name="Graham D.E."/>
            <person name="Kyrpides N.C."/>
            <person name="Fleischmann R.D."/>
            <person name="Quackenbush J."/>
            <person name="Lee N.H."/>
            <person name="Sutton G.G."/>
            <person name="Gill S.R."/>
            <person name="Kirkness E.F."/>
            <person name="Dougherty B.A."/>
            <person name="McKenney K."/>
            <person name="Adams M.D."/>
            <person name="Loftus B.J."/>
            <person name="Peterson S.N."/>
            <person name="Reich C.I."/>
            <person name="McNeil L.K."/>
            <person name="Badger J.H."/>
            <person name="Glodek A."/>
            <person name="Zhou L."/>
            <person name="Overbeek R."/>
            <person name="Gocayne J.D."/>
            <person name="Weidman J.F."/>
            <person name="McDonald L.A."/>
            <person name="Utterback T.R."/>
            <person name="Cotton M.D."/>
            <person name="Spriggs T."/>
            <person name="Artiach P."/>
            <person name="Kaine B.P."/>
            <person name="Sykes S.M."/>
            <person name="Sadow P.W."/>
            <person name="D'Andrea K.P."/>
            <person name="Bowman C."/>
            <person name="Fujii C."/>
            <person name="Garland S.A."/>
            <person name="Mason T.M."/>
            <person name="Olsen G.J."/>
            <person name="Fraser C.M."/>
            <person name="Smith H.O."/>
            <person name="Woese C.R."/>
            <person name="Venter J.C."/>
        </authorList>
    </citation>
    <scope>NUCLEOTIDE SEQUENCE [LARGE SCALE GENOMIC DNA]</scope>
    <source>
        <strain>ATCC 49558 / DSM 4304 / JCM 9628 / NBRC 100126 / VC-16</strain>
    </source>
</reference>
<gene>
    <name type="primary">rpl15e</name>
    <name type="ordered locus">AF_2319</name>
</gene>
<accession>O27965</accession>
<protein>
    <recommendedName>
        <fullName evidence="2">Large ribosomal subunit protein eL15</fullName>
    </recommendedName>
    <alternativeName>
        <fullName>50S ribosomal protein L15e</fullName>
    </alternativeName>
</protein>
<dbReference type="EMBL" id="AE000782">
    <property type="protein sequence ID" value="AAB88937.1"/>
    <property type="molecule type" value="Genomic_DNA"/>
</dbReference>
<dbReference type="PIR" id="G69539">
    <property type="entry name" value="G69539"/>
</dbReference>
<dbReference type="RefSeq" id="WP_010879808.1">
    <property type="nucleotide sequence ID" value="NC_000917.1"/>
</dbReference>
<dbReference type="SMR" id="O27965"/>
<dbReference type="STRING" id="224325.AF_2319"/>
<dbReference type="PaxDb" id="224325-AF_2319"/>
<dbReference type="EnsemblBacteria" id="AAB88937">
    <property type="protein sequence ID" value="AAB88937"/>
    <property type="gene ID" value="AF_2319"/>
</dbReference>
<dbReference type="KEGG" id="afu:AF_2319"/>
<dbReference type="eggNOG" id="arCOG04209">
    <property type="taxonomic scope" value="Archaea"/>
</dbReference>
<dbReference type="HOGENOM" id="CLU_080796_1_0_2"/>
<dbReference type="OrthoDB" id="8183at2157"/>
<dbReference type="PhylomeDB" id="O27965"/>
<dbReference type="Proteomes" id="UP000002199">
    <property type="component" value="Chromosome"/>
</dbReference>
<dbReference type="GO" id="GO:0022625">
    <property type="term" value="C:cytosolic large ribosomal subunit"/>
    <property type="evidence" value="ECO:0007669"/>
    <property type="project" value="TreeGrafter"/>
</dbReference>
<dbReference type="GO" id="GO:0003723">
    <property type="term" value="F:RNA binding"/>
    <property type="evidence" value="ECO:0007669"/>
    <property type="project" value="TreeGrafter"/>
</dbReference>
<dbReference type="GO" id="GO:0003735">
    <property type="term" value="F:structural constituent of ribosome"/>
    <property type="evidence" value="ECO:0007669"/>
    <property type="project" value="InterPro"/>
</dbReference>
<dbReference type="GO" id="GO:0002181">
    <property type="term" value="P:cytoplasmic translation"/>
    <property type="evidence" value="ECO:0007669"/>
    <property type="project" value="TreeGrafter"/>
</dbReference>
<dbReference type="FunFam" id="3.40.1120.10:FF:000002">
    <property type="entry name" value="50S ribosomal protein L15e"/>
    <property type="match status" value="1"/>
</dbReference>
<dbReference type="Gene3D" id="3.40.1120.10">
    <property type="entry name" value="Ribosomal protein l15e"/>
    <property type="match status" value="1"/>
</dbReference>
<dbReference type="HAMAP" id="MF_00256">
    <property type="entry name" value="Ribosomal_eL15"/>
    <property type="match status" value="1"/>
</dbReference>
<dbReference type="InterPro" id="IPR024794">
    <property type="entry name" value="Rbsml_eL15_core_dom_sf"/>
</dbReference>
<dbReference type="InterPro" id="IPR000439">
    <property type="entry name" value="Ribosomal_eL15"/>
</dbReference>
<dbReference type="InterPro" id="IPR020926">
    <property type="entry name" value="Ribosomal_eL15_arc"/>
</dbReference>
<dbReference type="InterPro" id="IPR020925">
    <property type="entry name" value="Ribosomal_eL15_CS"/>
</dbReference>
<dbReference type="InterPro" id="IPR012678">
    <property type="entry name" value="Ribosomal_uL23/eL15/eS24_sf"/>
</dbReference>
<dbReference type="NCBIfam" id="NF003269">
    <property type="entry name" value="PRK04243.1"/>
    <property type="match status" value="1"/>
</dbReference>
<dbReference type="PANTHER" id="PTHR11847:SF4">
    <property type="entry name" value="LARGE RIBOSOMAL SUBUNIT PROTEIN EL15"/>
    <property type="match status" value="1"/>
</dbReference>
<dbReference type="PANTHER" id="PTHR11847">
    <property type="entry name" value="RIBOSOMAL PROTEIN L15"/>
    <property type="match status" value="1"/>
</dbReference>
<dbReference type="Pfam" id="PF00827">
    <property type="entry name" value="Ribosomal_L15e"/>
    <property type="match status" value="1"/>
</dbReference>
<dbReference type="SMART" id="SM01384">
    <property type="entry name" value="Ribosomal_L15e"/>
    <property type="match status" value="1"/>
</dbReference>
<dbReference type="SUPFAM" id="SSF54189">
    <property type="entry name" value="Ribosomal proteins S24e, L23 and L15e"/>
    <property type="match status" value="1"/>
</dbReference>
<dbReference type="PROSITE" id="PS01194">
    <property type="entry name" value="RIBOSOMAL_L15E"/>
    <property type="match status" value="1"/>
</dbReference>
<evidence type="ECO:0000256" key="1">
    <source>
        <dbReference type="SAM" id="MobiDB-lite"/>
    </source>
</evidence>
<evidence type="ECO:0000305" key="2"/>
<comment type="similarity">
    <text evidence="2">Belongs to the eukaryotic ribosomal protein eL15 family.</text>
</comment>
<organism>
    <name type="scientific">Archaeoglobus fulgidus (strain ATCC 49558 / DSM 4304 / JCM 9628 / NBRC 100126 / VC-16)</name>
    <dbReference type="NCBI Taxonomy" id="224325"/>
    <lineage>
        <taxon>Archaea</taxon>
        <taxon>Methanobacteriati</taxon>
        <taxon>Methanobacteriota</taxon>
        <taxon>Archaeoglobi</taxon>
        <taxon>Archaeoglobales</taxon>
        <taxon>Archaeoglobaceae</taxon>
        <taxon>Archaeoglobus</taxon>
    </lineage>
</organism>
<feature type="chain" id="PRO_0000127569" description="Large ribosomal subunit protein eL15">
    <location>
        <begin position="1"/>
        <end position="194"/>
    </location>
</feature>
<feature type="region of interest" description="Disordered" evidence="1">
    <location>
        <begin position="164"/>
        <end position="194"/>
    </location>
</feature>
<feature type="compositionally biased region" description="Basic residues" evidence="1">
    <location>
        <begin position="166"/>
        <end position="175"/>
    </location>
</feature>
<proteinExistence type="inferred from homology"/>
<sequence>MKSMYAYIREAWKRPYEGYVGELMWHRLQKWRREPAVVRIPRPTRLDRARALGYKAKKGIIVVRVRIRRGGRRATRPNKGRKSKGLMVNRRTPKKNLQWIAEERANRKYPNMEVLNSYWVGEDGRYKWFEVILVDRDHPAIKSDPQLSWVSRTRGRVYRGLTSAGRKARGLRRKGRGAEKVRPSLRANFRKKRR</sequence>